<proteinExistence type="inferred from homology"/>
<gene>
    <name evidence="1" type="primary">gatC</name>
    <name type="ordered locus">GTNG_0261</name>
</gene>
<name>GATC_GEOTN</name>
<evidence type="ECO:0000255" key="1">
    <source>
        <dbReference type="HAMAP-Rule" id="MF_00122"/>
    </source>
</evidence>
<evidence type="ECO:0000256" key="2">
    <source>
        <dbReference type="SAM" id="MobiDB-lite"/>
    </source>
</evidence>
<sequence>MSRISIEQVKHVADLARLAMTDEEAELFTKQLDAIITFAEQLNELDTENVPPTSHVLDMRNVMREDEPEPGLPREEVLKNAPDQQDGQFRVPAILE</sequence>
<protein>
    <recommendedName>
        <fullName evidence="1">Aspartyl/glutamyl-tRNA(Asn/Gln) amidotransferase subunit C</fullName>
        <shortName evidence="1">Asp/Glu-ADT subunit C</shortName>
        <ecNumber evidence="1">6.3.5.-</ecNumber>
    </recommendedName>
</protein>
<comment type="function">
    <text evidence="1">Allows the formation of correctly charged Asn-tRNA(Asn) or Gln-tRNA(Gln) through the transamidation of misacylated Asp-tRNA(Asn) or Glu-tRNA(Gln) in organisms which lack either or both of asparaginyl-tRNA or glutaminyl-tRNA synthetases. The reaction takes place in the presence of glutamine and ATP through an activated phospho-Asp-tRNA(Asn) or phospho-Glu-tRNA(Gln).</text>
</comment>
<comment type="catalytic activity">
    <reaction evidence="1">
        <text>L-glutamyl-tRNA(Gln) + L-glutamine + ATP + H2O = L-glutaminyl-tRNA(Gln) + L-glutamate + ADP + phosphate + H(+)</text>
        <dbReference type="Rhea" id="RHEA:17521"/>
        <dbReference type="Rhea" id="RHEA-COMP:9681"/>
        <dbReference type="Rhea" id="RHEA-COMP:9684"/>
        <dbReference type="ChEBI" id="CHEBI:15377"/>
        <dbReference type="ChEBI" id="CHEBI:15378"/>
        <dbReference type="ChEBI" id="CHEBI:29985"/>
        <dbReference type="ChEBI" id="CHEBI:30616"/>
        <dbReference type="ChEBI" id="CHEBI:43474"/>
        <dbReference type="ChEBI" id="CHEBI:58359"/>
        <dbReference type="ChEBI" id="CHEBI:78520"/>
        <dbReference type="ChEBI" id="CHEBI:78521"/>
        <dbReference type="ChEBI" id="CHEBI:456216"/>
    </reaction>
</comment>
<comment type="catalytic activity">
    <reaction evidence="1">
        <text>L-aspartyl-tRNA(Asn) + L-glutamine + ATP + H2O = L-asparaginyl-tRNA(Asn) + L-glutamate + ADP + phosphate + 2 H(+)</text>
        <dbReference type="Rhea" id="RHEA:14513"/>
        <dbReference type="Rhea" id="RHEA-COMP:9674"/>
        <dbReference type="Rhea" id="RHEA-COMP:9677"/>
        <dbReference type="ChEBI" id="CHEBI:15377"/>
        <dbReference type="ChEBI" id="CHEBI:15378"/>
        <dbReference type="ChEBI" id="CHEBI:29985"/>
        <dbReference type="ChEBI" id="CHEBI:30616"/>
        <dbReference type="ChEBI" id="CHEBI:43474"/>
        <dbReference type="ChEBI" id="CHEBI:58359"/>
        <dbReference type="ChEBI" id="CHEBI:78515"/>
        <dbReference type="ChEBI" id="CHEBI:78516"/>
        <dbReference type="ChEBI" id="CHEBI:456216"/>
    </reaction>
</comment>
<comment type="subunit">
    <text evidence="1">Heterotrimer of A, B and C subunits.</text>
</comment>
<comment type="similarity">
    <text evidence="1">Belongs to the GatC family.</text>
</comment>
<accession>A4IJZ1</accession>
<keyword id="KW-0067">ATP-binding</keyword>
<keyword id="KW-0436">Ligase</keyword>
<keyword id="KW-0547">Nucleotide-binding</keyword>
<keyword id="KW-0648">Protein biosynthesis</keyword>
<organism>
    <name type="scientific">Geobacillus thermodenitrificans (strain NG80-2)</name>
    <dbReference type="NCBI Taxonomy" id="420246"/>
    <lineage>
        <taxon>Bacteria</taxon>
        <taxon>Bacillati</taxon>
        <taxon>Bacillota</taxon>
        <taxon>Bacilli</taxon>
        <taxon>Bacillales</taxon>
        <taxon>Anoxybacillaceae</taxon>
        <taxon>Geobacillus</taxon>
    </lineage>
</organism>
<feature type="chain" id="PRO_1000016125" description="Aspartyl/glutamyl-tRNA(Asn/Gln) amidotransferase subunit C">
    <location>
        <begin position="1"/>
        <end position="96"/>
    </location>
</feature>
<feature type="region of interest" description="Disordered" evidence="2">
    <location>
        <begin position="64"/>
        <end position="96"/>
    </location>
</feature>
<dbReference type="EC" id="6.3.5.-" evidence="1"/>
<dbReference type="EMBL" id="CP000557">
    <property type="protein sequence ID" value="ABO65645.1"/>
    <property type="molecule type" value="Genomic_DNA"/>
</dbReference>
<dbReference type="RefSeq" id="WP_008881445.1">
    <property type="nucleotide sequence ID" value="NC_009328.1"/>
</dbReference>
<dbReference type="SMR" id="A4IJZ1"/>
<dbReference type="GeneID" id="87622135"/>
<dbReference type="KEGG" id="gtn:GTNG_0261"/>
<dbReference type="eggNOG" id="COG0721">
    <property type="taxonomic scope" value="Bacteria"/>
</dbReference>
<dbReference type="HOGENOM" id="CLU_105899_1_2_9"/>
<dbReference type="Proteomes" id="UP000001578">
    <property type="component" value="Chromosome"/>
</dbReference>
<dbReference type="GO" id="GO:0050566">
    <property type="term" value="F:asparaginyl-tRNA synthase (glutamine-hydrolyzing) activity"/>
    <property type="evidence" value="ECO:0007669"/>
    <property type="project" value="RHEA"/>
</dbReference>
<dbReference type="GO" id="GO:0005524">
    <property type="term" value="F:ATP binding"/>
    <property type="evidence" value="ECO:0007669"/>
    <property type="project" value="UniProtKB-KW"/>
</dbReference>
<dbReference type="GO" id="GO:0050567">
    <property type="term" value="F:glutaminyl-tRNA synthase (glutamine-hydrolyzing) activity"/>
    <property type="evidence" value="ECO:0007669"/>
    <property type="project" value="UniProtKB-UniRule"/>
</dbReference>
<dbReference type="GO" id="GO:0070681">
    <property type="term" value="P:glutaminyl-tRNAGln biosynthesis via transamidation"/>
    <property type="evidence" value="ECO:0007669"/>
    <property type="project" value="TreeGrafter"/>
</dbReference>
<dbReference type="GO" id="GO:0006450">
    <property type="term" value="P:regulation of translational fidelity"/>
    <property type="evidence" value="ECO:0007669"/>
    <property type="project" value="InterPro"/>
</dbReference>
<dbReference type="GO" id="GO:0006412">
    <property type="term" value="P:translation"/>
    <property type="evidence" value="ECO:0007669"/>
    <property type="project" value="UniProtKB-UniRule"/>
</dbReference>
<dbReference type="Gene3D" id="1.10.20.60">
    <property type="entry name" value="Glu-tRNAGln amidotransferase C subunit, N-terminal domain"/>
    <property type="match status" value="1"/>
</dbReference>
<dbReference type="HAMAP" id="MF_00122">
    <property type="entry name" value="GatC"/>
    <property type="match status" value="1"/>
</dbReference>
<dbReference type="InterPro" id="IPR036113">
    <property type="entry name" value="Asp/Glu-ADT_sf_sub_c"/>
</dbReference>
<dbReference type="InterPro" id="IPR003837">
    <property type="entry name" value="GatC"/>
</dbReference>
<dbReference type="NCBIfam" id="TIGR00135">
    <property type="entry name" value="gatC"/>
    <property type="match status" value="1"/>
</dbReference>
<dbReference type="PANTHER" id="PTHR15004">
    <property type="entry name" value="GLUTAMYL-TRNA(GLN) AMIDOTRANSFERASE SUBUNIT C, MITOCHONDRIAL"/>
    <property type="match status" value="1"/>
</dbReference>
<dbReference type="PANTHER" id="PTHR15004:SF0">
    <property type="entry name" value="GLUTAMYL-TRNA(GLN) AMIDOTRANSFERASE SUBUNIT C, MITOCHONDRIAL"/>
    <property type="match status" value="1"/>
</dbReference>
<dbReference type="Pfam" id="PF02686">
    <property type="entry name" value="GatC"/>
    <property type="match status" value="1"/>
</dbReference>
<dbReference type="SUPFAM" id="SSF141000">
    <property type="entry name" value="Glu-tRNAGln amidotransferase C subunit"/>
    <property type="match status" value="1"/>
</dbReference>
<reference key="1">
    <citation type="journal article" date="2007" name="Proc. Natl. Acad. Sci. U.S.A.">
        <title>Genome and proteome of long-chain alkane degrading Geobacillus thermodenitrificans NG80-2 isolated from a deep-subsurface oil reservoir.</title>
        <authorList>
            <person name="Feng L."/>
            <person name="Wang W."/>
            <person name="Cheng J."/>
            <person name="Ren Y."/>
            <person name="Zhao G."/>
            <person name="Gao C."/>
            <person name="Tang Y."/>
            <person name="Liu X."/>
            <person name="Han W."/>
            <person name="Peng X."/>
            <person name="Liu R."/>
            <person name="Wang L."/>
        </authorList>
    </citation>
    <scope>NUCLEOTIDE SEQUENCE [LARGE SCALE GENOMIC DNA]</scope>
    <source>
        <strain>NG80-2</strain>
    </source>
</reference>